<feature type="chain" id="PRO_0000195038" description="Protein LIN1">
    <location>
        <begin position="1"/>
        <end position="340"/>
    </location>
</feature>
<feature type="domain" description="GYF" evidence="1">
    <location>
        <begin position="282"/>
        <end position="340"/>
    </location>
</feature>
<feature type="region of interest" description="Disordered" evidence="2">
    <location>
        <begin position="1"/>
        <end position="86"/>
    </location>
</feature>
<feature type="compositionally biased region" description="Polar residues" evidence="2">
    <location>
        <begin position="1"/>
        <end position="10"/>
    </location>
</feature>
<feature type="compositionally biased region" description="Basic and acidic residues" evidence="2">
    <location>
        <begin position="14"/>
        <end position="30"/>
    </location>
</feature>
<feature type="compositionally biased region" description="Acidic residues" evidence="2">
    <location>
        <begin position="47"/>
        <end position="59"/>
    </location>
</feature>
<feature type="compositionally biased region" description="Basic and acidic residues" evidence="2">
    <location>
        <begin position="62"/>
        <end position="82"/>
    </location>
</feature>
<name>LIN1_YEAST</name>
<sequence>MKYTQYPNSSKLKRNSDRREHDEKLSDELHNQSTIYEDEELSRAEYDSDSDSSVEDSTDNENSGKEMDEKSYEKNEDHVEDHRKRKKSKIQLLDIAEFKKENLADLDYQIGNSESKVEKGVNIEPFNIDDEIKHGVFDKDGNYIKTENATENDQQDNEEWMNDVINTEEVNRLEKEQSVKTQNSRHYMVHEALNLLKFFLVDENETVLESLGRLNKLRKIAISKKNKSLKYVIHGIELLSDLINILEKKGFSEVYEYNRLKVQDAIEEEIFDDSSRIVNHKTKLWGFKWLNKLDEYHGLYTNYEMSYWQKSYFKNSVIVKFHSEPDRDENWIHVSCLSFM</sequence>
<protein>
    <recommendedName>
        <fullName>Protein LIN1</fullName>
    </recommendedName>
</protein>
<reference key="1">
    <citation type="journal article" date="1994" name="Science">
        <title>Complete nucleotide sequence of Saccharomyces cerevisiae chromosome VIII.</title>
        <authorList>
            <person name="Johnston M."/>
            <person name="Andrews S."/>
            <person name="Brinkman R."/>
            <person name="Cooper J."/>
            <person name="Ding H."/>
            <person name="Dover J."/>
            <person name="Du Z."/>
            <person name="Favello A."/>
            <person name="Fulton L."/>
            <person name="Gattung S."/>
            <person name="Geisel C."/>
            <person name="Kirsten J."/>
            <person name="Kucaba T."/>
            <person name="Hillier L.W."/>
            <person name="Jier M."/>
            <person name="Johnston L."/>
            <person name="Langston Y."/>
            <person name="Latreille P."/>
            <person name="Louis E.J."/>
            <person name="Macri C."/>
            <person name="Mardis E."/>
            <person name="Menezes S."/>
            <person name="Mouser L."/>
            <person name="Nhan M."/>
            <person name="Rifkin L."/>
            <person name="Riles L."/>
            <person name="St Peter H."/>
            <person name="Trevaskis E."/>
            <person name="Vaughan K."/>
            <person name="Vignati D."/>
            <person name="Wilcox L."/>
            <person name="Wohldman P."/>
            <person name="Waterston R."/>
            <person name="Wilson R."/>
            <person name="Vaudin M."/>
        </authorList>
    </citation>
    <scope>NUCLEOTIDE SEQUENCE [LARGE SCALE GENOMIC DNA]</scope>
    <source>
        <strain>ATCC 204508 / S288c</strain>
    </source>
</reference>
<reference key="2">
    <citation type="journal article" date="2014" name="G3 (Bethesda)">
        <title>The reference genome sequence of Saccharomyces cerevisiae: Then and now.</title>
        <authorList>
            <person name="Engel S.R."/>
            <person name="Dietrich F.S."/>
            <person name="Fisk D.G."/>
            <person name="Binkley G."/>
            <person name="Balakrishnan R."/>
            <person name="Costanzo M.C."/>
            <person name="Dwight S.S."/>
            <person name="Hitz B.C."/>
            <person name="Karra K."/>
            <person name="Nash R.S."/>
            <person name="Weng S."/>
            <person name="Wong E.D."/>
            <person name="Lloyd P."/>
            <person name="Skrzypek M.S."/>
            <person name="Miyasato S.R."/>
            <person name="Simison M."/>
            <person name="Cherry J.M."/>
        </authorList>
    </citation>
    <scope>GENOME REANNOTATION</scope>
    <source>
        <strain>ATCC 204508 / S288c</strain>
    </source>
</reference>
<reference key="3">
    <citation type="journal article" date="2007" name="Genome Res.">
        <title>Approaching a complete repository of sequence-verified protein-encoding clones for Saccharomyces cerevisiae.</title>
        <authorList>
            <person name="Hu Y."/>
            <person name="Rolfs A."/>
            <person name="Bhullar B."/>
            <person name="Murthy T.V.S."/>
            <person name="Zhu C."/>
            <person name="Berger M.F."/>
            <person name="Camargo A.A."/>
            <person name="Kelley F."/>
            <person name="McCarron S."/>
            <person name="Jepson D."/>
            <person name="Richardson A."/>
            <person name="Raphael J."/>
            <person name="Moreira D."/>
            <person name="Taycher E."/>
            <person name="Zuo D."/>
            <person name="Mohr S."/>
            <person name="Kane M.F."/>
            <person name="Williamson J."/>
            <person name="Simpson A.J.G."/>
            <person name="Bulyk M.L."/>
            <person name="Harlow E."/>
            <person name="Marsischky G."/>
            <person name="Kolodner R.D."/>
            <person name="LaBaer J."/>
        </authorList>
    </citation>
    <scope>NUCLEOTIDE SEQUENCE [GENOMIC DNA]</scope>
    <source>
        <strain>ATCC 204508 / S288c</strain>
    </source>
</reference>
<reference key="4">
    <citation type="journal article" date="2002" name="Yeast">
        <title>Proteins interacting with Lin 1p, a putative link between chromosome segregation, mRNA splicing and DNA replication in Saccharomyces cerevisiae.</title>
        <authorList>
            <person name="Bialkowska A."/>
            <person name="Kurlandzka A."/>
        </authorList>
    </citation>
    <scope>SUBCELLULAR LOCATION</scope>
    <scope>INTERACTION WITH IRR1; PRP8; HEX3; NFI1; WSS1; RFC1 AND YJL149W</scope>
</reference>
<reference key="5">
    <citation type="journal article" date="2003" name="Nature">
        <title>Global analysis of protein expression in yeast.</title>
        <authorList>
            <person name="Ghaemmaghami S."/>
            <person name="Huh W.-K."/>
            <person name="Bower K."/>
            <person name="Howson R.W."/>
            <person name="Belle A."/>
            <person name="Dephoure N."/>
            <person name="O'Shea E.K."/>
            <person name="Weissman J.S."/>
        </authorList>
    </citation>
    <scope>LEVEL OF PROTEIN EXPRESSION [LARGE SCALE ANALYSIS]</scope>
</reference>
<dbReference type="EMBL" id="U10397">
    <property type="protein sequence ID" value="AAB68990.1"/>
    <property type="molecule type" value="Genomic_DNA"/>
</dbReference>
<dbReference type="EMBL" id="AY557881">
    <property type="protein sequence ID" value="AAS56207.1"/>
    <property type="molecule type" value="Genomic_DNA"/>
</dbReference>
<dbReference type="EMBL" id="BK006934">
    <property type="protein sequence ID" value="DAA06849.1"/>
    <property type="molecule type" value="Genomic_DNA"/>
</dbReference>
<dbReference type="PIR" id="S46768">
    <property type="entry name" value="S46768"/>
</dbReference>
<dbReference type="RefSeq" id="NP_012026.1">
    <property type="nucleotide sequence ID" value="NM_001179287.1"/>
</dbReference>
<dbReference type="SMR" id="P38852"/>
<dbReference type="BioGRID" id="36590">
    <property type="interactions" value="120"/>
</dbReference>
<dbReference type="ComplexPortal" id="CPX-29">
    <property type="entry name" value="U5 small nuclear ribonucleoprotein complex"/>
</dbReference>
<dbReference type="DIP" id="DIP-4407N"/>
<dbReference type="FunCoup" id="P38852">
    <property type="interactions" value="818"/>
</dbReference>
<dbReference type="IntAct" id="P38852">
    <property type="interactions" value="12"/>
</dbReference>
<dbReference type="MINT" id="P38852"/>
<dbReference type="STRING" id="4932.YHR156C"/>
<dbReference type="iPTMnet" id="P38852"/>
<dbReference type="PaxDb" id="4932-YHR156C"/>
<dbReference type="PeptideAtlas" id="P38852"/>
<dbReference type="EnsemblFungi" id="YHR156C_mRNA">
    <property type="protein sequence ID" value="YHR156C"/>
    <property type="gene ID" value="YHR156C"/>
</dbReference>
<dbReference type="GeneID" id="856561"/>
<dbReference type="KEGG" id="sce:YHR156C"/>
<dbReference type="AGR" id="SGD:S000001199"/>
<dbReference type="SGD" id="S000001199">
    <property type="gene designation" value="LIN1"/>
</dbReference>
<dbReference type="VEuPathDB" id="FungiDB:YHR156C"/>
<dbReference type="eggNOG" id="KOG2950">
    <property type="taxonomic scope" value="Eukaryota"/>
</dbReference>
<dbReference type="HOGENOM" id="CLU_065846_1_0_1"/>
<dbReference type="InParanoid" id="P38852"/>
<dbReference type="OMA" id="YEMQYWK"/>
<dbReference type="OrthoDB" id="331341at2759"/>
<dbReference type="BioCyc" id="YEAST:G3O-31191-MONOMER"/>
<dbReference type="PRO" id="PR:P38852"/>
<dbReference type="Proteomes" id="UP000002311">
    <property type="component" value="Chromosome VIII"/>
</dbReference>
<dbReference type="RNAct" id="P38852">
    <property type="molecule type" value="protein"/>
</dbReference>
<dbReference type="GO" id="GO:0000785">
    <property type="term" value="C:chromatin"/>
    <property type="evidence" value="ECO:0000314"/>
    <property type="project" value="SGD"/>
</dbReference>
<dbReference type="GO" id="GO:0005634">
    <property type="term" value="C:nucleus"/>
    <property type="evidence" value="ECO:0000314"/>
    <property type="project" value="SGD"/>
</dbReference>
<dbReference type="GO" id="GO:0005681">
    <property type="term" value="C:spliceosomal complex"/>
    <property type="evidence" value="ECO:0000303"/>
    <property type="project" value="ComplexPortal"/>
</dbReference>
<dbReference type="GO" id="GO:0005682">
    <property type="term" value="C:U5 snRNP"/>
    <property type="evidence" value="ECO:0000314"/>
    <property type="project" value="SGD"/>
</dbReference>
<dbReference type="GO" id="GO:0000398">
    <property type="term" value="P:mRNA splicing, via spliceosome"/>
    <property type="evidence" value="ECO:0000303"/>
    <property type="project" value="ComplexPortal"/>
</dbReference>
<dbReference type="FunFam" id="3.30.1490.40:FF:000008">
    <property type="entry name" value="Lin1p"/>
    <property type="match status" value="1"/>
</dbReference>
<dbReference type="Gene3D" id="3.30.1490.40">
    <property type="match status" value="1"/>
</dbReference>
<dbReference type="InterPro" id="IPR039905">
    <property type="entry name" value="CD2BP2/Lin1"/>
</dbReference>
<dbReference type="InterPro" id="IPR003169">
    <property type="entry name" value="GYF"/>
</dbReference>
<dbReference type="InterPro" id="IPR035445">
    <property type="entry name" value="GYF-like_dom_sf"/>
</dbReference>
<dbReference type="PANTHER" id="PTHR13138:SF3">
    <property type="entry name" value="CD2 ANTIGEN CYTOPLASMIC TAIL-BINDING PROTEIN 2"/>
    <property type="match status" value="1"/>
</dbReference>
<dbReference type="PANTHER" id="PTHR13138">
    <property type="entry name" value="PROTEIN LIN1"/>
    <property type="match status" value="1"/>
</dbReference>
<dbReference type="Pfam" id="PF02213">
    <property type="entry name" value="GYF"/>
    <property type="match status" value="1"/>
</dbReference>
<dbReference type="SMART" id="SM00444">
    <property type="entry name" value="GYF"/>
    <property type="match status" value="1"/>
</dbReference>
<dbReference type="SUPFAM" id="SSF55277">
    <property type="entry name" value="GYF domain"/>
    <property type="match status" value="1"/>
</dbReference>
<dbReference type="PROSITE" id="PS50829">
    <property type="entry name" value="GYF"/>
    <property type="match status" value="1"/>
</dbReference>
<keyword id="KW-0539">Nucleus</keyword>
<keyword id="KW-1185">Reference proteome</keyword>
<comment type="subunit">
    <text evidence="3">Interacts with the cohesin subunit IRR1. Interacts with PRP8, HEX3, NFI1, WSS1, RFC1 and YJL149W.</text>
</comment>
<comment type="subcellular location">
    <subcellularLocation>
        <location evidence="3">Nucleus</location>
    </subcellularLocation>
    <text>Probably associated with chromatin.</text>
</comment>
<comment type="miscellaneous">
    <text evidence="4">Present with 799 molecules/cell in log phase SD medium.</text>
</comment>
<comment type="similarity">
    <text evidence="5">Belongs to the LIN1 family.</text>
</comment>
<proteinExistence type="evidence at protein level"/>
<evidence type="ECO:0000255" key="1">
    <source>
        <dbReference type="PROSITE-ProRule" id="PRU00101"/>
    </source>
</evidence>
<evidence type="ECO:0000256" key="2">
    <source>
        <dbReference type="SAM" id="MobiDB-lite"/>
    </source>
</evidence>
<evidence type="ECO:0000269" key="3">
    <source>
    </source>
</evidence>
<evidence type="ECO:0000269" key="4">
    <source>
    </source>
</evidence>
<evidence type="ECO:0000305" key="5"/>
<gene>
    <name type="primary">LIN1</name>
    <name type="ordered locus">YHR156C</name>
</gene>
<organism>
    <name type="scientific">Saccharomyces cerevisiae (strain ATCC 204508 / S288c)</name>
    <name type="common">Baker's yeast</name>
    <dbReference type="NCBI Taxonomy" id="559292"/>
    <lineage>
        <taxon>Eukaryota</taxon>
        <taxon>Fungi</taxon>
        <taxon>Dikarya</taxon>
        <taxon>Ascomycota</taxon>
        <taxon>Saccharomycotina</taxon>
        <taxon>Saccharomycetes</taxon>
        <taxon>Saccharomycetales</taxon>
        <taxon>Saccharomycetaceae</taxon>
        <taxon>Saccharomyces</taxon>
    </lineage>
</organism>
<accession>P38852</accession>
<accession>D3DLA5</accession>